<organism>
    <name type="scientific">Bacillus anthracis (strain A0248)</name>
    <dbReference type="NCBI Taxonomy" id="592021"/>
    <lineage>
        <taxon>Bacteria</taxon>
        <taxon>Bacillati</taxon>
        <taxon>Bacillota</taxon>
        <taxon>Bacilli</taxon>
        <taxon>Bacillales</taxon>
        <taxon>Bacillaceae</taxon>
        <taxon>Bacillus</taxon>
        <taxon>Bacillus cereus group</taxon>
    </lineage>
</organism>
<name>RL35_BACAA</name>
<proteinExistence type="inferred from homology"/>
<sequence length="66" mass="7496">MPKQKTHRGAAKRFKKTGSGKLKRSHAYTSHLFANKSTKAKRKLRKAGVVSAGDFKRIRQMLDNLK</sequence>
<gene>
    <name evidence="1" type="primary">rpmI</name>
    <name type="ordered locus">BAA_4828</name>
</gene>
<dbReference type="EMBL" id="CP001598">
    <property type="protein sequence ID" value="ACQ48126.1"/>
    <property type="molecule type" value="Genomic_DNA"/>
</dbReference>
<dbReference type="RefSeq" id="WP_001125945.1">
    <property type="nucleotide sequence ID" value="NC_012659.1"/>
</dbReference>
<dbReference type="SMR" id="C3PAG3"/>
<dbReference type="GeneID" id="93006536"/>
<dbReference type="KEGG" id="bai:BAA_4828"/>
<dbReference type="HOGENOM" id="CLU_169643_3_0_9"/>
<dbReference type="GO" id="GO:0022625">
    <property type="term" value="C:cytosolic large ribosomal subunit"/>
    <property type="evidence" value="ECO:0007669"/>
    <property type="project" value="TreeGrafter"/>
</dbReference>
<dbReference type="GO" id="GO:0003735">
    <property type="term" value="F:structural constituent of ribosome"/>
    <property type="evidence" value="ECO:0007669"/>
    <property type="project" value="InterPro"/>
</dbReference>
<dbReference type="GO" id="GO:0006412">
    <property type="term" value="P:translation"/>
    <property type="evidence" value="ECO:0007669"/>
    <property type="project" value="UniProtKB-UniRule"/>
</dbReference>
<dbReference type="FunFam" id="4.10.410.60:FF:000001">
    <property type="entry name" value="50S ribosomal protein L35"/>
    <property type="match status" value="1"/>
</dbReference>
<dbReference type="Gene3D" id="4.10.410.60">
    <property type="match status" value="1"/>
</dbReference>
<dbReference type="HAMAP" id="MF_00514">
    <property type="entry name" value="Ribosomal_bL35"/>
    <property type="match status" value="1"/>
</dbReference>
<dbReference type="InterPro" id="IPR001706">
    <property type="entry name" value="Ribosomal_bL35"/>
</dbReference>
<dbReference type="InterPro" id="IPR021137">
    <property type="entry name" value="Ribosomal_bL35-like"/>
</dbReference>
<dbReference type="InterPro" id="IPR018265">
    <property type="entry name" value="Ribosomal_bL35_CS"/>
</dbReference>
<dbReference type="InterPro" id="IPR037229">
    <property type="entry name" value="Ribosomal_bL35_sf"/>
</dbReference>
<dbReference type="NCBIfam" id="TIGR00001">
    <property type="entry name" value="rpmI_bact"/>
    <property type="match status" value="1"/>
</dbReference>
<dbReference type="PANTHER" id="PTHR33343">
    <property type="entry name" value="54S RIBOSOMAL PROTEIN BL35M"/>
    <property type="match status" value="1"/>
</dbReference>
<dbReference type="PANTHER" id="PTHR33343:SF1">
    <property type="entry name" value="LARGE RIBOSOMAL SUBUNIT PROTEIN BL35M"/>
    <property type="match status" value="1"/>
</dbReference>
<dbReference type="Pfam" id="PF01632">
    <property type="entry name" value="Ribosomal_L35p"/>
    <property type="match status" value="1"/>
</dbReference>
<dbReference type="PRINTS" id="PR00064">
    <property type="entry name" value="RIBOSOMALL35"/>
</dbReference>
<dbReference type="SUPFAM" id="SSF143034">
    <property type="entry name" value="L35p-like"/>
    <property type="match status" value="1"/>
</dbReference>
<dbReference type="PROSITE" id="PS00936">
    <property type="entry name" value="RIBOSOMAL_L35"/>
    <property type="match status" value="1"/>
</dbReference>
<accession>C3PAG3</accession>
<evidence type="ECO:0000255" key="1">
    <source>
        <dbReference type="HAMAP-Rule" id="MF_00514"/>
    </source>
</evidence>
<evidence type="ECO:0000256" key="2">
    <source>
        <dbReference type="SAM" id="MobiDB-lite"/>
    </source>
</evidence>
<evidence type="ECO:0000305" key="3"/>
<protein>
    <recommendedName>
        <fullName evidence="1">Large ribosomal subunit protein bL35</fullName>
    </recommendedName>
    <alternativeName>
        <fullName evidence="3">50S ribosomal protein L35</fullName>
    </alternativeName>
</protein>
<feature type="chain" id="PRO_1000146118" description="Large ribosomal subunit protein bL35">
    <location>
        <begin position="1"/>
        <end position="66"/>
    </location>
</feature>
<feature type="region of interest" description="Disordered" evidence="2">
    <location>
        <begin position="1"/>
        <end position="26"/>
    </location>
</feature>
<comment type="similarity">
    <text evidence="1">Belongs to the bacterial ribosomal protein bL35 family.</text>
</comment>
<keyword id="KW-0687">Ribonucleoprotein</keyword>
<keyword id="KW-0689">Ribosomal protein</keyword>
<reference key="1">
    <citation type="submission" date="2009-04" db="EMBL/GenBank/DDBJ databases">
        <title>Genome sequence of Bacillus anthracis A0248.</title>
        <authorList>
            <person name="Dodson R.J."/>
            <person name="Munk A.C."/>
            <person name="Bruce D."/>
            <person name="Detter C."/>
            <person name="Tapia R."/>
            <person name="Sutton G."/>
            <person name="Sims D."/>
            <person name="Brettin T."/>
        </authorList>
    </citation>
    <scope>NUCLEOTIDE SEQUENCE [LARGE SCALE GENOMIC DNA]</scope>
    <source>
        <strain>A0248</strain>
    </source>
</reference>